<gene>
    <name evidence="1" type="primary">fabH</name>
    <name type="ordered locus">CLK_3077</name>
</gene>
<accession>B1KU74</accession>
<feature type="chain" id="PRO_1000187857" description="Beta-ketoacyl-[acyl-carrier-protein] synthase III">
    <location>
        <begin position="1"/>
        <end position="326"/>
    </location>
</feature>
<feature type="region of interest" description="ACP-binding" evidence="1">
    <location>
        <begin position="252"/>
        <end position="256"/>
    </location>
</feature>
<feature type="active site" evidence="1">
    <location>
        <position position="112"/>
    </location>
</feature>
<feature type="active site" evidence="1">
    <location>
        <position position="251"/>
    </location>
</feature>
<feature type="active site" evidence="1">
    <location>
        <position position="281"/>
    </location>
</feature>
<proteinExistence type="inferred from homology"/>
<name>FABH_CLOBM</name>
<keyword id="KW-0012">Acyltransferase</keyword>
<keyword id="KW-0963">Cytoplasm</keyword>
<keyword id="KW-0275">Fatty acid biosynthesis</keyword>
<keyword id="KW-0276">Fatty acid metabolism</keyword>
<keyword id="KW-0444">Lipid biosynthesis</keyword>
<keyword id="KW-0443">Lipid metabolism</keyword>
<keyword id="KW-0511">Multifunctional enzyme</keyword>
<keyword id="KW-0808">Transferase</keyword>
<dbReference type="EC" id="2.3.1.180" evidence="1"/>
<dbReference type="EMBL" id="CP000962">
    <property type="protein sequence ID" value="ACA55174.1"/>
    <property type="molecule type" value="Genomic_DNA"/>
</dbReference>
<dbReference type="RefSeq" id="WP_012343195.1">
    <property type="nucleotide sequence ID" value="NC_010520.1"/>
</dbReference>
<dbReference type="SMR" id="B1KU74"/>
<dbReference type="KEGG" id="cbl:CLK_3077"/>
<dbReference type="HOGENOM" id="CLU_039592_3_1_9"/>
<dbReference type="UniPathway" id="UPA00094"/>
<dbReference type="GO" id="GO:0005737">
    <property type="term" value="C:cytoplasm"/>
    <property type="evidence" value="ECO:0007669"/>
    <property type="project" value="UniProtKB-SubCell"/>
</dbReference>
<dbReference type="GO" id="GO:0004315">
    <property type="term" value="F:3-oxoacyl-[acyl-carrier-protein] synthase activity"/>
    <property type="evidence" value="ECO:0007669"/>
    <property type="project" value="InterPro"/>
</dbReference>
<dbReference type="GO" id="GO:0033818">
    <property type="term" value="F:beta-ketoacyl-acyl-carrier-protein synthase III activity"/>
    <property type="evidence" value="ECO:0007669"/>
    <property type="project" value="UniProtKB-UniRule"/>
</dbReference>
<dbReference type="GO" id="GO:0006633">
    <property type="term" value="P:fatty acid biosynthetic process"/>
    <property type="evidence" value="ECO:0007669"/>
    <property type="project" value="UniProtKB-UniRule"/>
</dbReference>
<dbReference type="GO" id="GO:0044550">
    <property type="term" value="P:secondary metabolite biosynthetic process"/>
    <property type="evidence" value="ECO:0007669"/>
    <property type="project" value="TreeGrafter"/>
</dbReference>
<dbReference type="CDD" id="cd00830">
    <property type="entry name" value="KAS_III"/>
    <property type="match status" value="1"/>
</dbReference>
<dbReference type="FunFam" id="3.40.47.10:FF:000004">
    <property type="entry name" value="3-oxoacyl-[acyl-carrier-protein] synthase 3"/>
    <property type="match status" value="1"/>
</dbReference>
<dbReference type="Gene3D" id="3.40.47.10">
    <property type="match status" value="1"/>
</dbReference>
<dbReference type="HAMAP" id="MF_01815">
    <property type="entry name" value="FabH"/>
    <property type="match status" value="1"/>
</dbReference>
<dbReference type="InterPro" id="IPR013747">
    <property type="entry name" value="ACP_syn_III_C"/>
</dbReference>
<dbReference type="InterPro" id="IPR013751">
    <property type="entry name" value="ACP_syn_III_N"/>
</dbReference>
<dbReference type="InterPro" id="IPR004655">
    <property type="entry name" value="FabH"/>
</dbReference>
<dbReference type="InterPro" id="IPR016039">
    <property type="entry name" value="Thiolase-like"/>
</dbReference>
<dbReference type="NCBIfam" id="TIGR00747">
    <property type="entry name" value="fabH"/>
    <property type="match status" value="1"/>
</dbReference>
<dbReference type="NCBIfam" id="NF006829">
    <property type="entry name" value="PRK09352.1"/>
    <property type="match status" value="1"/>
</dbReference>
<dbReference type="PANTHER" id="PTHR34069">
    <property type="entry name" value="3-OXOACYL-[ACYL-CARRIER-PROTEIN] SYNTHASE 3"/>
    <property type="match status" value="1"/>
</dbReference>
<dbReference type="PANTHER" id="PTHR34069:SF2">
    <property type="entry name" value="BETA-KETOACYL-[ACYL-CARRIER-PROTEIN] SYNTHASE III"/>
    <property type="match status" value="1"/>
</dbReference>
<dbReference type="Pfam" id="PF08545">
    <property type="entry name" value="ACP_syn_III"/>
    <property type="match status" value="1"/>
</dbReference>
<dbReference type="Pfam" id="PF08541">
    <property type="entry name" value="ACP_syn_III_C"/>
    <property type="match status" value="1"/>
</dbReference>
<dbReference type="SUPFAM" id="SSF53901">
    <property type="entry name" value="Thiolase-like"/>
    <property type="match status" value="1"/>
</dbReference>
<evidence type="ECO:0000255" key="1">
    <source>
        <dbReference type="HAMAP-Rule" id="MF_01815"/>
    </source>
</evidence>
<comment type="function">
    <text evidence="1">Catalyzes the condensation reaction of fatty acid synthesis by the addition to an acyl acceptor of two carbons from malonyl-ACP. Catalyzes the first condensation reaction which initiates fatty acid synthesis and may therefore play a role in governing the total rate of fatty acid production. Possesses both acetoacetyl-ACP synthase and acetyl transacylase activities. Its substrate specificity determines the biosynthesis of branched-chain and/or straight-chain of fatty acids.</text>
</comment>
<comment type="catalytic activity">
    <reaction evidence="1">
        <text>malonyl-[ACP] + acetyl-CoA + H(+) = 3-oxobutanoyl-[ACP] + CO2 + CoA</text>
        <dbReference type="Rhea" id="RHEA:12080"/>
        <dbReference type="Rhea" id="RHEA-COMP:9623"/>
        <dbReference type="Rhea" id="RHEA-COMP:9625"/>
        <dbReference type="ChEBI" id="CHEBI:15378"/>
        <dbReference type="ChEBI" id="CHEBI:16526"/>
        <dbReference type="ChEBI" id="CHEBI:57287"/>
        <dbReference type="ChEBI" id="CHEBI:57288"/>
        <dbReference type="ChEBI" id="CHEBI:78449"/>
        <dbReference type="ChEBI" id="CHEBI:78450"/>
        <dbReference type="EC" id="2.3.1.180"/>
    </reaction>
</comment>
<comment type="pathway">
    <text evidence="1">Lipid metabolism; fatty acid biosynthesis.</text>
</comment>
<comment type="subunit">
    <text evidence="1">Homodimer.</text>
</comment>
<comment type="subcellular location">
    <subcellularLocation>
        <location evidence="1">Cytoplasm</location>
    </subcellularLocation>
</comment>
<comment type="domain">
    <text evidence="1">The last Arg residue of the ACP-binding site is essential for the weak association between ACP/AcpP and FabH.</text>
</comment>
<comment type="similarity">
    <text evidence="1">Belongs to the thiolase-like superfamily. FabH family.</text>
</comment>
<organism>
    <name type="scientific">Clostridium botulinum (strain Loch Maree / Type A3)</name>
    <dbReference type="NCBI Taxonomy" id="498214"/>
    <lineage>
        <taxon>Bacteria</taxon>
        <taxon>Bacillati</taxon>
        <taxon>Bacillota</taxon>
        <taxon>Clostridia</taxon>
        <taxon>Eubacteriales</taxon>
        <taxon>Clostridiaceae</taxon>
        <taxon>Clostridium</taxon>
    </lineage>
</organism>
<sequence>MSNISVIGTGSYVPNDIITNDFLSTIVDTSDEWIRTRTGILERRISKEENTIYMATESAKEAIKNANIDANDLDLIIVATLTPDNFMPSTACSVQKEIGAINALCFDISAACSGFIYGLEIACSMLKNSFRNKALIIGAENLSKIVDWEDRNTCVLFGDGAGAAILSKTKEEGILEFHSGSNGLKGEHLTCGVLKANNTSNKNDRLEKNNFIKMNGKEIFRFAVGAMNETICNIQEKTKWDLNEVKYIISHQANSRIIEYTAKKLNTEKDKFYMNLDKYGNTSAASIPIALDEMNKRGLLNKQDKIILVGFGGGLTFGGAAIVWSI</sequence>
<protein>
    <recommendedName>
        <fullName evidence="1">Beta-ketoacyl-[acyl-carrier-protein] synthase III</fullName>
        <shortName evidence="1">Beta-ketoacyl-ACP synthase III</shortName>
        <shortName evidence="1">KAS III</shortName>
        <ecNumber evidence="1">2.3.1.180</ecNumber>
    </recommendedName>
    <alternativeName>
        <fullName evidence="1">3-oxoacyl-[acyl-carrier-protein] synthase 3</fullName>
    </alternativeName>
    <alternativeName>
        <fullName evidence="1">3-oxoacyl-[acyl-carrier-protein] synthase III</fullName>
    </alternativeName>
</protein>
<reference key="1">
    <citation type="journal article" date="2007" name="PLoS ONE">
        <title>Analysis of the neurotoxin complex genes in Clostridium botulinum A1-A4 and B1 strains: BoNT/A3, /Ba4 and /B1 clusters are located within plasmids.</title>
        <authorList>
            <person name="Smith T.J."/>
            <person name="Hill K.K."/>
            <person name="Foley B.T."/>
            <person name="Detter J.C."/>
            <person name="Munk A.C."/>
            <person name="Bruce D.C."/>
            <person name="Doggett N.A."/>
            <person name="Smith L.A."/>
            <person name="Marks J.D."/>
            <person name="Xie G."/>
            <person name="Brettin T.S."/>
        </authorList>
    </citation>
    <scope>NUCLEOTIDE SEQUENCE [LARGE SCALE GENOMIC DNA]</scope>
    <source>
        <strain>Loch Maree / Type A3</strain>
    </source>
</reference>